<keyword id="KW-0067">ATP-binding</keyword>
<keyword id="KW-0115">cAMP biosynthesis</keyword>
<keyword id="KW-0966">Cell projection</keyword>
<keyword id="KW-0456">Lyase</keyword>
<keyword id="KW-0460">Magnesium</keyword>
<keyword id="KW-0472">Membrane</keyword>
<keyword id="KW-0479">Metal-binding</keyword>
<keyword id="KW-0547">Nucleotide-binding</keyword>
<keyword id="KW-1185">Reference proteome</keyword>
<keyword id="KW-0677">Repeat</keyword>
<keyword id="KW-0812">Transmembrane</keyword>
<keyword id="KW-1133">Transmembrane helix</keyword>
<accession>Q03100</accession>
<accession>Q54TF5</accession>
<dbReference type="EC" id="4.6.1.1"/>
<dbReference type="EMBL" id="L05499">
    <property type="protein sequence ID" value="AAA33163.1"/>
    <property type="molecule type" value="Genomic_DNA"/>
</dbReference>
<dbReference type="EMBL" id="L05496">
    <property type="protein sequence ID" value="AAA33163.1"/>
    <property type="status" value="JOINED"/>
    <property type="molecule type" value="Genomic_DNA"/>
</dbReference>
<dbReference type="EMBL" id="L05497">
    <property type="protein sequence ID" value="AAA33163.1"/>
    <property type="status" value="JOINED"/>
    <property type="molecule type" value="Genomic_DNA"/>
</dbReference>
<dbReference type="EMBL" id="L05498">
    <property type="protein sequence ID" value="AAA33163.1"/>
    <property type="status" value="JOINED"/>
    <property type="molecule type" value="Genomic_DNA"/>
</dbReference>
<dbReference type="EMBL" id="AAFI02000042">
    <property type="protein sequence ID" value="EAL66534.2"/>
    <property type="molecule type" value="Genomic_DNA"/>
</dbReference>
<dbReference type="PIR" id="B42239">
    <property type="entry name" value="B42239"/>
</dbReference>
<dbReference type="RefSeq" id="XP_640636.2">
    <property type="nucleotide sequence ID" value="XM_635544.2"/>
</dbReference>
<dbReference type="SMR" id="Q03100"/>
<dbReference type="FunCoup" id="Q03100">
    <property type="interactions" value="3"/>
</dbReference>
<dbReference type="STRING" id="44689.Q03100"/>
<dbReference type="PaxDb" id="44689-DDB0214814"/>
<dbReference type="EnsemblProtists" id="EAL66534">
    <property type="protein sequence ID" value="EAL66534"/>
    <property type="gene ID" value="DDB_G0281545"/>
</dbReference>
<dbReference type="GeneID" id="8623247"/>
<dbReference type="KEGG" id="ddi:DDB_G0281545"/>
<dbReference type="dictyBase" id="DDB_G0281545">
    <property type="gene designation" value="acaA"/>
</dbReference>
<dbReference type="VEuPathDB" id="AmoebaDB:DDB_G0281545"/>
<dbReference type="eggNOG" id="KOG3619">
    <property type="taxonomic scope" value="Eukaryota"/>
</dbReference>
<dbReference type="HOGENOM" id="CLU_253935_0_0_1"/>
<dbReference type="InParanoid" id="Q03100"/>
<dbReference type="OMA" id="IRILCFN"/>
<dbReference type="Reactome" id="R-DDI-163615">
    <property type="pathway name" value="PKA activation"/>
</dbReference>
<dbReference type="Reactome" id="R-DDI-170660">
    <property type="pathway name" value="Adenylate cyclase activating pathway"/>
</dbReference>
<dbReference type="Reactome" id="R-DDI-170670">
    <property type="pathway name" value="Adenylate cyclase inhibitory pathway"/>
</dbReference>
<dbReference type="Reactome" id="R-DDI-418597">
    <property type="pathway name" value="G alpha (z) signalling events"/>
</dbReference>
<dbReference type="Reactome" id="R-DDI-5610787">
    <property type="pathway name" value="Hedgehog 'off' state"/>
</dbReference>
<dbReference type="PRO" id="PR:Q03100"/>
<dbReference type="Proteomes" id="UP000002195">
    <property type="component" value="Chromosome 3"/>
</dbReference>
<dbReference type="GO" id="GO:0071944">
    <property type="term" value="C:cell periphery"/>
    <property type="evidence" value="ECO:0000314"/>
    <property type="project" value="dictyBase"/>
</dbReference>
<dbReference type="GO" id="GO:0031254">
    <property type="term" value="C:cell trailing edge"/>
    <property type="evidence" value="ECO:0000314"/>
    <property type="project" value="dictyBase"/>
</dbReference>
<dbReference type="GO" id="GO:0031410">
    <property type="term" value="C:cytoplasmic vesicle"/>
    <property type="evidence" value="ECO:0000314"/>
    <property type="project" value="dictyBase"/>
</dbReference>
<dbReference type="GO" id="GO:1903561">
    <property type="term" value="C:extracellular vesicle"/>
    <property type="evidence" value="ECO:0000314"/>
    <property type="project" value="dictyBase"/>
</dbReference>
<dbReference type="GO" id="GO:0097708">
    <property type="term" value="C:intracellular vesicle"/>
    <property type="evidence" value="ECO:0000314"/>
    <property type="project" value="dictyBase"/>
</dbReference>
<dbReference type="GO" id="GO:0005771">
    <property type="term" value="C:multivesicular body"/>
    <property type="evidence" value="ECO:0000314"/>
    <property type="project" value="dictyBase"/>
</dbReference>
<dbReference type="GO" id="GO:0005886">
    <property type="term" value="C:plasma membrane"/>
    <property type="evidence" value="ECO:0000314"/>
    <property type="project" value="dictyBase"/>
</dbReference>
<dbReference type="GO" id="GO:0031259">
    <property type="term" value="C:uropod membrane"/>
    <property type="evidence" value="ECO:0000314"/>
    <property type="project" value="dictyBase"/>
</dbReference>
<dbReference type="GO" id="GO:0004016">
    <property type="term" value="F:adenylate cyclase activity"/>
    <property type="evidence" value="ECO:0000314"/>
    <property type="project" value="dictyBase"/>
</dbReference>
<dbReference type="GO" id="GO:0005524">
    <property type="term" value="F:ATP binding"/>
    <property type="evidence" value="ECO:0007669"/>
    <property type="project" value="UniProtKB-KW"/>
</dbReference>
<dbReference type="GO" id="GO:0046872">
    <property type="term" value="F:metal ion binding"/>
    <property type="evidence" value="ECO:0007669"/>
    <property type="project" value="UniProtKB-KW"/>
</dbReference>
<dbReference type="GO" id="GO:0007015">
    <property type="term" value="P:actin filament organization"/>
    <property type="evidence" value="ECO:0000315"/>
    <property type="project" value="dictyBase"/>
</dbReference>
<dbReference type="GO" id="GO:0140582">
    <property type="term" value="P:adenylate cyclase-activating G protein-coupled cAMP receptor signaling pathway"/>
    <property type="evidence" value="ECO:0000315"/>
    <property type="project" value="dictyBase"/>
</dbReference>
<dbReference type="GO" id="GO:0007189">
    <property type="term" value="P:adenylate cyclase-activating G protein-coupled receptor signaling pathway"/>
    <property type="evidence" value="ECO:0000315"/>
    <property type="project" value="dictyBase"/>
</dbReference>
<dbReference type="GO" id="GO:0031152">
    <property type="term" value="P:aggregation involved in sorocarp development"/>
    <property type="evidence" value="ECO:0000315"/>
    <property type="project" value="dictyBase"/>
</dbReference>
<dbReference type="GO" id="GO:0061939">
    <property type="term" value="P:c-di-GMP signaling"/>
    <property type="evidence" value="ECO:0000315"/>
    <property type="project" value="dictyBase"/>
</dbReference>
<dbReference type="GO" id="GO:0006171">
    <property type="term" value="P:cAMP biosynthetic process"/>
    <property type="evidence" value="ECO:0007669"/>
    <property type="project" value="UniProtKB-KW"/>
</dbReference>
<dbReference type="GO" id="GO:0019933">
    <property type="term" value="P:cAMP-mediated signaling"/>
    <property type="evidence" value="ECO:0000316"/>
    <property type="project" value="dictyBase"/>
</dbReference>
<dbReference type="GO" id="GO:0031271">
    <property type="term" value="P:lateral pseudopodium assembly"/>
    <property type="evidence" value="ECO:0000315"/>
    <property type="project" value="dictyBase"/>
</dbReference>
<dbReference type="GO" id="GO:0010628">
    <property type="term" value="P:positive regulation of gene expression"/>
    <property type="evidence" value="ECO:0000315"/>
    <property type="project" value="dictyBase"/>
</dbReference>
<dbReference type="GO" id="GO:0008360">
    <property type="term" value="P:regulation of cell shape"/>
    <property type="evidence" value="ECO:0000315"/>
    <property type="project" value="dictyBase"/>
</dbReference>
<dbReference type="GO" id="GO:0050920">
    <property type="term" value="P:regulation of chemotaxis"/>
    <property type="evidence" value="ECO:0000315"/>
    <property type="project" value="dictyBase"/>
</dbReference>
<dbReference type="GO" id="GO:0031285">
    <property type="term" value="P:regulation of sorocarp stalk cell differentiation"/>
    <property type="evidence" value="ECO:0000315"/>
    <property type="project" value="dictyBase"/>
</dbReference>
<dbReference type="GO" id="GO:0010447">
    <property type="term" value="P:response to acidic pH"/>
    <property type="evidence" value="ECO:0000314"/>
    <property type="project" value="dictyBase"/>
</dbReference>
<dbReference type="GO" id="GO:0046686">
    <property type="term" value="P:response to cadmium ion"/>
    <property type="evidence" value="ECO:0007007"/>
    <property type="project" value="dictyBase"/>
</dbReference>
<dbReference type="GO" id="GO:0031000">
    <property type="term" value="P:response to caffeine"/>
    <property type="evidence" value="ECO:0000314"/>
    <property type="project" value="dictyBase"/>
</dbReference>
<dbReference type="GO" id="GO:1902168">
    <property type="term" value="P:response to catechin"/>
    <property type="evidence" value="ECO:0000314"/>
    <property type="project" value="dictyBase"/>
</dbReference>
<dbReference type="GO" id="GO:1904643">
    <property type="term" value="P:response to curcumin"/>
    <property type="evidence" value="ECO:0000314"/>
    <property type="project" value="dictyBase"/>
</dbReference>
<dbReference type="GO" id="GO:1902351">
    <property type="term" value="P:response to imidacloprid"/>
    <property type="evidence" value="ECO:0000270"/>
    <property type="project" value="dictyBase"/>
</dbReference>
<dbReference type="GO" id="GO:0010042">
    <property type="term" value="P:response to manganese ion"/>
    <property type="evidence" value="ECO:0000314"/>
    <property type="project" value="dictyBase"/>
</dbReference>
<dbReference type="GO" id="GO:0010225">
    <property type="term" value="P:response to UV-C"/>
    <property type="evidence" value="ECO:0000314"/>
    <property type="project" value="dictyBase"/>
</dbReference>
<dbReference type="GO" id="GO:0030435">
    <property type="term" value="P:sporulation resulting in formation of a cellular spore"/>
    <property type="evidence" value="ECO:0000316"/>
    <property type="project" value="dictyBase"/>
</dbReference>
<dbReference type="CDD" id="cd07302">
    <property type="entry name" value="CHD"/>
    <property type="match status" value="2"/>
</dbReference>
<dbReference type="Gene3D" id="3.30.70.1230">
    <property type="entry name" value="Nucleotide cyclase"/>
    <property type="match status" value="2"/>
</dbReference>
<dbReference type="InterPro" id="IPR001054">
    <property type="entry name" value="A/G_cyclase"/>
</dbReference>
<dbReference type="InterPro" id="IPR018297">
    <property type="entry name" value="A/G_cyclase_CS"/>
</dbReference>
<dbReference type="InterPro" id="IPR029787">
    <property type="entry name" value="Nucleotide_cyclase"/>
</dbReference>
<dbReference type="PANTHER" id="PTHR45627">
    <property type="entry name" value="ADENYLATE CYCLASE TYPE 1"/>
    <property type="match status" value="1"/>
</dbReference>
<dbReference type="PANTHER" id="PTHR45627:SF12">
    <property type="entry name" value="ADENYLATE CYCLASE TYPE 2"/>
    <property type="match status" value="1"/>
</dbReference>
<dbReference type="Pfam" id="PF00211">
    <property type="entry name" value="Guanylate_cyc"/>
    <property type="match status" value="3"/>
</dbReference>
<dbReference type="SMART" id="SM00044">
    <property type="entry name" value="CYCc"/>
    <property type="match status" value="2"/>
</dbReference>
<dbReference type="SUPFAM" id="SSF55073">
    <property type="entry name" value="Nucleotide cyclase"/>
    <property type="match status" value="2"/>
</dbReference>
<dbReference type="PROSITE" id="PS00452">
    <property type="entry name" value="GUANYLATE_CYCLASE_1"/>
    <property type="match status" value="1"/>
</dbReference>
<dbReference type="PROSITE" id="PS50125">
    <property type="entry name" value="GUANYLATE_CYCLASE_2"/>
    <property type="match status" value="2"/>
</dbReference>
<protein>
    <recommendedName>
        <fullName>Adenylate cyclase, aggregation specific</fullName>
        <ecNumber>4.6.1.1</ecNumber>
    </recommendedName>
    <alternativeName>
        <fullName>ATP pyrophosphate-lyase</fullName>
    </alternativeName>
    <alternativeName>
        <fullName>Adenylyl cyclase</fullName>
    </alternativeName>
</protein>
<proteinExistence type="evidence at protein level"/>
<organism>
    <name type="scientific">Dictyostelium discoideum</name>
    <name type="common">Social amoeba</name>
    <dbReference type="NCBI Taxonomy" id="44689"/>
    <lineage>
        <taxon>Eukaryota</taxon>
        <taxon>Amoebozoa</taxon>
        <taxon>Evosea</taxon>
        <taxon>Eumycetozoa</taxon>
        <taxon>Dictyostelia</taxon>
        <taxon>Dictyosteliales</taxon>
        <taxon>Dictyosteliaceae</taxon>
        <taxon>Dictyostelium</taxon>
    </lineage>
</organism>
<evidence type="ECO:0000255" key="1"/>
<evidence type="ECO:0000255" key="2">
    <source>
        <dbReference type="PROSITE-ProRule" id="PRU00099"/>
    </source>
</evidence>
<evidence type="ECO:0000256" key="3">
    <source>
        <dbReference type="SAM" id="MobiDB-lite"/>
    </source>
</evidence>
<evidence type="ECO:0000269" key="4">
    <source>
    </source>
</evidence>
<evidence type="ECO:0000269" key="5">
    <source>
    </source>
</evidence>
<evidence type="ECO:0000269" key="6">
    <source>
    </source>
</evidence>
<evidence type="ECO:0000269" key="7">
    <source>
    </source>
</evidence>
<evidence type="ECO:0000269" key="8">
    <source>
    </source>
</evidence>
<evidence type="ECO:0000269" key="9">
    <source>
    </source>
</evidence>
<evidence type="ECO:0000269" key="10">
    <source>
    </source>
</evidence>
<evidence type="ECO:0000269" key="11">
    <source>
    </source>
</evidence>
<evidence type="ECO:0000269" key="12">
    <source>
    </source>
</evidence>
<evidence type="ECO:0000269" key="13">
    <source>
    </source>
</evidence>
<evidence type="ECO:0000269" key="14">
    <source>
    </source>
</evidence>
<evidence type="ECO:0000269" key="15">
    <source>
    </source>
</evidence>
<evidence type="ECO:0000305" key="16"/>
<feature type="chain" id="PRO_0000195714" description="Adenylate cyclase, aggregation specific">
    <location>
        <begin position="1"/>
        <end position="1407"/>
    </location>
</feature>
<feature type="topological domain" description="Cytoplasmic" evidence="1">
    <location>
        <begin position="1"/>
        <end position="219"/>
    </location>
</feature>
<feature type="transmembrane region" description="Helical" evidence="1">
    <location>
        <begin position="220"/>
        <end position="240"/>
    </location>
</feature>
<feature type="transmembrane region" description="Helical" evidence="1">
    <location>
        <begin position="244"/>
        <end position="264"/>
    </location>
</feature>
<feature type="transmembrane region" description="Helical" evidence="1">
    <location>
        <begin position="276"/>
        <end position="296"/>
    </location>
</feature>
<feature type="transmembrane region" description="Helical" evidence="1">
    <location>
        <begin position="304"/>
        <end position="324"/>
    </location>
</feature>
<feature type="transmembrane region" description="Helical" evidence="1">
    <location>
        <begin position="325"/>
        <end position="345"/>
    </location>
</feature>
<feature type="transmembrane region" description="Helical" evidence="1">
    <location>
        <begin position="353"/>
        <end position="373"/>
    </location>
</feature>
<feature type="topological domain" description="Cytoplasmic" evidence="1">
    <location>
        <begin position="374"/>
        <end position="962"/>
    </location>
</feature>
<feature type="transmembrane region" description="Helical" evidence="1">
    <location>
        <begin position="963"/>
        <end position="979"/>
    </location>
</feature>
<feature type="transmembrane region" description="Helical" evidence="1">
    <location>
        <begin position="992"/>
        <end position="1012"/>
    </location>
</feature>
<feature type="transmembrane region" description="Helical" evidence="1">
    <location>
        <begin position="1018"/>
        <end position="1038"/>
    </location>
</feature>
<feature type="transmembrane region" description="Helical" evidence="1">
    <location>
        <begin position="1071"/>
        <end position="1091"/>
    </location>
</feature>
<feature type="transmembrane region" description="Helical" evidence="1">
    <location>
        <begin position="1105"/>
        <end position="1125"/>
    </location>
</feature>
<feature type="transmembrane region" description="Helical" evidence="1">
    <location>
        <begin position="1378"/>
        <end position="1398"/>
    </location>
</feature>
<feature type="topological domain" description="Cytoplasmic" evidence="1">
    <location>
        <begin position="1399"/>
        <end position="1407"/>
    </location>
</feature>
<feature type="domain" description="Guanylate cyclase 1" evidence="2">
    <location>
        <begin position="438"/>
        <end position="661"/>
    </location>
</feature>
<feature type="domain" description="Guanylate cyclase 2" evidence="2">
    <location>
        <begin position="1189"/>
        <end position="1311"/>
    </location>
</feature>
<feature type="region of interest" description="Disordered" evidence="3">
    <location>
        <begin position="28"/>
        <end position="131"/>
    </location>
</feature>
<feature type="region of interest" description="Disordered" evidence="3">
    <location>
        <begin position="502"/>
        <end position="590"/>
    </location>
</feature>
<feature type="region of interest" description="Disordered" evidence="3">
    <location>
        <begin position="751"/>
        <end position="799"/>
    </location>
</feature>
<feature type="region of interest" description="Disordered" evidence="3">
    <location>
        <begin position="828"/>
        <end position="876"/>
    </location>
</feature>
<feature type="compositionally biased region" description="Polar residues" evidence="3">
    <location>
        <begin position="51"/>
        <end position="63"/>
    </location>
</feature>
<feature type="compositionally biased region" description="Gly residues" evidence="3">
    <location>
        <begin position="64"/>
        <end position="75"/>
    </location>
</feature>
<feature type="compositionally biased region" description="Low complexity" evidence="3">
    <location>
        <begin position="80"/>
        <end position="90"/>
    </location>
</feature>
<feature type="compositionally biased region" description="Low complexity" evidence="3">
    <location>
        <begin position="98"/>
        <end position="115"/>
    </location>
</feature>
<feature type="compositionally biased region" description="Low complexity" evidence="3">
    <location>
        <begin position="505"/>
        <end position="526"/>
    </location>
</feature>
<feature type="compositionally biased region" description="Low complexity" evidence="3">
    <location>
        <begin position="535"/>
        <end position="581"/>
    </location>
</feature>
<feature type="compositionally biased region" description="Low complexity" evidence="3">
    <location>
        <begin position="752"/>
        <end position="795"/>
    </location>
</feature>
<feature type="compositionally biased region" description="Polar residues" evidence="3">
    <location>
        <begin position="828"/>
        <end position="846"/>
    </location>
</feature>
<feature type="compositionally biased region" description="Low complexity" evidence="3">
    <location>
        <begin position="847"/>
        <end position="871"/>
    </location>
</feature>
<feature type="binding site" evidence="2">
    <location>
        <position position="443"/>
    </location>
    <ligand>
        <name>Mg(2+)</name>
        <dbReference type="ChEBI" id="CHEBI:18420"/>
        <label>1</label>
    </ligand>
</feature>
<feature type="binding site" evidence="2">
    <location>
        <position position="443"/>
    </location>
    <ligand>
        <name>Mg(2+)</name>
        <dbReference type="ChEBI" id="CHEBI:18420"/>
        <label>2</label>
    </ligand>
</feature>
<feature type="binding site" evidence="2">
    <location>
        <position position="444"/>
    </location>
    <ligand>
        <name>Mg(2+)</name>
        <dbReference type="ChEBI" id="CHEBI:18420"/>
        <label>2</label>
    </ligand>
</feature>
<feature type="binding site" evidence="2">
    <location>
        <position position="488"/>
    </location>
    <ligand>
        <name>Mg(2+)</name>
        <dbReference type="ChEBI" id="CHEBI:18420"/>
        <label>1</label>
    </ligand>
</feature>
<feature type="binding site" evidence="2">
    <location>
        <position position="488"/>
    </location>
    <ligand>
        <name>Mg(2+)</name>
        <dbReference type="ChEBI" id="CHEBI:18420"/>
        <label>2</label>
    </ligand>
</feature>
<feature type="mutagenesis site" description="In temperature-sensitive mutant tsaca2." evidence="4">
    <original>F</original>
    <variation>L</variation>
    <location>
        <position position="306"/>
    </location>
</feature>
<feature type="mutagenesis site" description="Constitutive activity." evidence="14">
    <original>L</original>
    <variation>S</variation>
    <location>
        <position position="394"/>
    </location>
</feature>
<feature type="mutagenesis site" description="In temperature-sensitive mutant tsaca2." evidence="4">
    <original>S</original>
    <variation>G</variation>
    <location>
        <position position="498"/>
    </location>
</feature>
<feature type="mutagenesis site" description="In temperature-sensitive mutant tsaca2." evidence="4">
    <original>K</original>
    <variation>E</variation>
    <location>
        <position position="504"/>
    </location>
</feature>
<feature type="mutagenesis site" description="In temperature-sensitive mutant tsaca2." evidence="4">
    <original>E</original>
    <variation>V</variation>
    <location>
        <position position="593"/>
    </location>
</feature>
<feature type="mutagenesis site" description="In temperature-sensitive mutant tsaca2." evidence="4">
    <original>I</original>
    <variation>T</variation>
    <location>
        <position position="649"/>
    </location>
</feature>
<feature type="sequence conflict" description="In Ref. 1; AAA33163." evidence="16" ref="1">
    <original>NN</original>
    <variation>TT</variation>
    <location>
        <begin position="567"/>
        <end position="568"/>
    </location>
</feature>
<feature type="sequence conflict" description="In Ref. 1; AAA33163." evidence="16" ref="1">
    <original>NN</original>
    <variation>TT</variation>
    <location>
        <begin position="578"/>
        <end position="579"/>
    </location>
</feature>
<feature type="sequence conflict" description="In Ref. 1; AAA33163." evidence="16" ref="1">
    <original>L</original>
    <variation>Y</variation>
    <location>
        <position position="940"/>
    </location>
</feature>
<reference key="1">
    <citation type="journal article" date="1992" name="Cell">
        <title>Structurally distinct and stage-specific adenylyl cyclase genes play different roles in Dictyostelium development.</title>
        <authorList>
            <person name="Pitt G.S."/>
            <person name="Milona N."/>
            <person name="Borleis J."/>
            <person name="Lin K.C."/>
            <person name="Reed R.R."/>
            <person name="Devreotes P.N."/>
        </authorList>
    </citation>
    <scope>NUCLEOTIDE SEQUENCE [GENOMIC DNA]</scope>
    <scope>FUNCTION</scope>
    <scope>CATALYTIC ACTIVITY</scope>
    <scope>ACTIVITY REGULATION</scope>
    <scope>DEVELOPMENTAL STAGE</scope>
    <scope>DISRUPTION PHENOTYPE</scope>
</reference>
<reference key="2">
    <citation type="journal article" date="2005" name="Nature">
        <title>The genome of the social amoeba Dictyostelium discoideum.</title>
        <authorList>
            <person name="Eichinger L."/>
            <person name="Pachebat J.A."/>
            <person name="Gloeckner G."/>
            <person name="Rajandream M.A."/>
            <person name="Sucgang R."/>
            <person name="Berriman M."/>
            <person name="Song J."/>
            <person name="Olsen R."/>
            <person name="Szafranski K."/>
            <person name="Xu Q."/>
            <person name="Tunggal B."/>
            <person name="Kummerfeld S."/>
            <person name="Madera M."/>
            <person name="Konfortov B.A."/>
            <person name="Rivero F."/>
            <person name="Bankier A.T."/>
            <person name="Lehmann R."/>
            <person name="Hamlin N."/>
            <person name="Davies R."/>
            <person name="Gaudet P."/>
            <person name="Fey P."/>
            <person name="Pilcher K."/>
            <person name="Chen G."/>
            <person name="Saunders D."/>
            <person name="Sodergren E.J."/>
            <person name="Davis P."/>
            <person name="Kerhornou A."/>
            <person name="Nie X."/>
            <person name="Hall N."/>
            <person name="Anjard C."/>
            <person name="Hemphill L."/>
            <person name="Bason N."/>
            <person name="Farbrother P."/>
            <person name="Desany B."/>
            <person name="Just E."/>
            <person name="Morio T."/>
            <person name="Rost R."/>
            <person name="Churcher C.M."/>
            <person name="Cooper J."/>
            <person name="Haydock S."/>
            <person name="van Driessche N."/>
            <person name="Cronin A."/>
            <person name="Goodhead I."/>
            <person name="Muzny D.M."/>
            <person name="Mourier T."/>
            <person name="Pain A."/>
            <person name="Lu M."/>
            <person name="Harper D."/>
            <person name="Lindsay R."/>
            <person name="Hauser H."/>
            <person name="James K.D."/>
            <person name="Quiles M."/>
            <person name="Madan Babu M."/>
            <person name="Saito T."/>
            <person name="Buchrieser C."/>
            <person name="Wardroper A."/>
            <person name="Felder M."/>
            <person name="Thangavelu M."/>
            <person name="Johnson D."/>
            <person name="Knights A."/>
            <person name="Loulseged H."/>
            <person name="Mungall K.L."/>
            <person name="Oliver K."/>
            <person name="Price C."/>
            <person name="Quail M.A."/>
            <person name="Urushihara H."/>
            <person name="Hernandez J."/>
            <person name="Rabbinowitsch E."/>
            <person name="Steffen D."/>
            <person name="Sanders M."/>
            <person name="Ma J."/>
            <person name="Kohara Y."/>
            <person name="Sharp S."/>
            <person name="Simmonds M.N."/>
            <person name="Spiegler S."/>
            <person name="Tivey A."/>
            <person name="Sugano S."/>
            <person name="White B."/>
            <person name="Walker D."/>
            <person name="Woodward J.R."/>
            <person name="Winckler T."/>
            <person name="Tanaka Y."/>
            <person name="Shaulsky G."/>
            <person name="Schleicher M."/>
            <person name="Weinstock G.M."/>
            <person name="Rosenthal A."/>
            <person name="Cox E.C."/>
            <person name="Chisholm R.L."/>
            <person name="Gibbs R.A."/>
            <person name="Loomis W.F."/>
            <person name="Platzer M."/>
            <person name="Kay R.R."/>
            <person name="Williams J.G."/>
            <person name="Dear P.H."/>
            <person name="Noegel A.A."/>
            <person name="Barrell B.G."/>
            <person name="Kuspa A."/>
        </authorList>
    </citation>
    <scope>NUCLEOTIDE SEQUENCE [LARGE SCALE GENOMIC DNA]</scope>
    <source>
        <strain>AX4</strain>
    </source>
</reference>
<reference key="3">
    <citation type="journal article" date="1993" name="Genes Dev.">
        <title>Extracellular cAMP is sufficient to restore developmental gene expression and morphogenesis in Dictyostelium cells lacking the aggregation adenylyl cyclase (ACA).</title>
        <authorList>
            <person name="Pitt G.S."/>
            <person name="Brandt R."/>
            <person name="Lin K.C."/>
            <person name="Devreotes P.N."/>
            <person name="Schaap P."/>
        </authorList>
    </citation>
    <scope>FUNCTION</scope>
    <scope>DISRUPTION PHENOTYPE</scope>
</reference>
<reference key="4">
    <citation type="journal article" date="1996" name="J. Biol. Chem.">
        <title>Constitutively active adenylyl cyclase mutant requires neither G proteins nor cytosolic regulators.</title>
        <authorList>
            <person name="Parent C.A."/>
            <person name="Devreotes P.N."/>
        </authorList>
    </citation>
    <scope>FUNCTION</scope>
    <scope>CATALYTIC ACTIVITY</scope>
    <scope>COFACTOR</scope>
    <scope>ACTIVITY REGULATION</scope>
    <scope>BIOPHYSICOCHEMICAL PROPERTIES</scope>
    <scope>MUTAGENESIS OF LEU-394</scope>
</reference>
<reference key="5">
    <citation type="journal article" date="1998" name="J. Biol. Chem.">
        <title>A novel adenylyl cyclase detected in rapidly developing mutants of Dictyostelium.</title>
        <authorList>
            <person name="Kim H.-J."/>
            <person name="Chang W.-T."/>
            <person name="Meima M."/>
            <person name="Gross J.D."/>
            <person name="Schaap P."/>
        </authorList>
    </citation>
    <scope>DISRUPTION PHENOTYPE</scope>
</reference>
<reference key="6">
    <citation type="journal article" date="2000" name="EMBO J.">
        <title>A temperature-sensitive adenylyl cyclase mutant of Dictyostelium.</title>
        <authorList>
            <person name="Patel H."/>
            <person name="Guo K."/>
            <person name="Parent C."/>
            <person name="Gross J."/>
            <person name="Devreotes P.N."/>
            <person name="Weijer C.J."/>
        </authorList>
    </citation>
    <scope>FUNCTION</scope>
    <scope>MUTAGENESIS OF PHE-306; SER-498; LYS-504; GLU-593 AND ILE-649</scope>
</reference>
<reference key="7">
    <citation type="journal article" date="2001" name="Dev. Biol.">
        <title>Adenylyl cyclase A expression is tip-specific in Dictyostelium slugs and directs StatA nuclear translocation and CudA gene expression.</title>
        <authorList>
            <person name="Verkerke-van Wijk I."/>
            <person name="Fukuzawa M."/>
            <person name="Devreotes P.N."/>
            <person name="Schaap P."/>
        </authorList>
    </citation>
    <scope>TISSUE SPECIFICITY</scope>
    <scope>DEVELOPMENTAL STAGE</scope>
</reference>
<reference key="8">
    <citation type="journal article" date="2001" name="Dev. Growth Differ.">
        <title>Spatial expression patterns of genes involved in cyclic AMP responses in Dictyostelium discoideum development.</title>
        <authorList>
            <person name="Tsujioka M."/>
            <person name="Yokoyama M."/>
            <person name="Nishio K."/>
            <person name="Kuwayama H."/>
            <person name="Morio T."/>
            <person name="Katoh M."/>
            <person name="Urushihara H."/>
            <person name="Saito T."/>
            <person name="Ochiai H."/>
            <person name="Tanaka Y."/>
            <person name="Takeuchi I."/>
            <person name="Maeda M."/>
        </authorList>
    </citation>
    <scope>TISSUE SPECIFICITY</scope>
    <scope>DEVELOPMENTAL STAGE</scope>
</reference>
<reference key="9">
    <citation type="journal article" date="2003" name="Cell">
        <title>Adenylyl cyclase localization regulates streaming during chemotaxis.</title>
        <authorList>
            <person name="Kriebel P.W."/>
            <person name="Barr V.A."/>
            <person name="Parent C.A."/>
        </authorList>
    </citation>
    <scope>FUNCTION</scope>
    <scope>SUBCELLULAR LOCATION</scope>
    <scope>CONSTITUTIVELY ACTIVE MUTANT</scope>
    <scope>DISRUPTION PHENOTYPE</scope>
</reference>
<reference key="10">
    <citation type="journal article" date="2005" name="Curr. Biol.">
        <title>The PI3K-mediated activation of CRAC independently regulates adenylyl cyclase activation and chemotaxis.</title>
        <authorList>
            <person name="Comer F.I."/>
            <person name="Lippincott C.K."/>
            <person name="Masbad J.J."/>
            <person name="Parent C.A."/>
        </authorList>
    </citation>
    <scope>ACTIVITY REGULATION</scope>
</reference>
<reference key="11">
    <citation type="journal article" date="2005" name="Eukaryot. Cell">
        <title>Intracellular role of adenylyl cyclase in regulation of lateral pseudopod formation during Dictyostelium chemotaxis.</title>
        <authorList>
            <person name="Stepanovic V."/>
            <person name="Wessels D."/>
            <person name="Daniels K."/>
            <person name="Loomis W.F."/>
            <person name="Soll D.R."/>
        </authorList>
    </citation>
    <scope>FUNCTION</scope>
    <scope>DISRUPTION PHENOTYPE</scope>
</reference>
<reference key="12">
    <citation type="journal article" date="2006" name="Eukaryot. Cell">
        <title>The C-module DNA-binding factor mediates expression of the dictyostelium aggregation-specific adenylyl cyclase ACA.</title>
        <authorList>
            <person name="Siol O."/>
            <person name="Dingermann T."/>
            <person name="Winckler T."/>
        </authorList>
    </citation>
    <scope>DEVELOPMENTAL STAGE</scope>
</reference>
<reference key="13">
    <citation type="journal article" date="2006" name="Mol. Biol. Cell">
        <title>Phosphoinositide 3-kinase activity controls the chemoattractant-mediated activation and adaptation of adenylyl cyclase.</title>
        <authorList>
            <person name="Comer F.I."/>
            <person name="Parent C.A."/>
        </authorList>
    </citation>
    <scope>ACTIVITY REGULATION</scope>
</reference>
<comment type="function">
    <text evidence="4 7 8 10 13 14">Coordinates cell aggregation by synthesizing the cAMP that influences differentiation and morphogenesis of cells within a developing multicellular structure.</text>
</comment>
<comment type="catalytic activity">
    <reaction evidence="8 14">
        <text>ATP = 3',5'-cyclic AMP + diphosphate</text>
        <dbReference type="Rhea" id="RHEA:15389"/>
        <dbReference type="ChEBI" id="CHEBI:30616"/>
        <dbReference type="ChEBI" id="CHEBI:33019"/>
        <dbReference type="ChEBI" id="CHEBI:58165"/>
        <dbReference type="EC" id="4.6.1.1"/>
    </reaction>
</comment>
<comment type="cofactor">
    <cofactor evidence="14">
        <name>Mg(2+)</name>
        <dbReference type="ChEBI" id="CHEBI:18420"/>
    </cofactor>
    <text evidence="14">Binds 2 magnesium ions per subunit.</text>
</comment>
<comment type="activity regulation">
    <text evidence="8 9 11 14">Regulated by cyclic AMP receptor 1 through a guanine nucleotide binding protein and protein CRAC. Both positively and negatively regulated by extracellular cAMP; this regulation is part of the mechanism that establishes the oscillatory cAMP waves during aggregation.</text>
</comment>
<comment type="biophysicochemical properties">
    <kinetics>
        <KM evidence="14">0.2 mM for cAMP</KM>
        <Vmax evidence="14">20.0 pmol/min/mg enzyme</Vmax>
    </kinetics>
</comment>
<comment type="subcellular location">
    <subcellularLocation>
        <location evidence="7">Membrane</location>
        <topology evidence="7">Multi-pass membrane protein</topology>
    </subcellularLocation>
    <subcellularLocation>
        <location evidence="7">Cell projection</location>
        <location evidence="7">Uropodium</location>
    </subcellularLocation>
    <text>In non-polarized cells ACA is uniformly distributed at the membrane but upon polarization it becomes highly enriched at the uropodium.</text>
</comment>
<comment type="tissue specificity">
    <text evidence="5 6">Expressed throughout the structure in the tipped mound and finger. Expressed primarily in the prestalk region of the slug. In the early culminant expression is increased in the posterior prespore and anterior-most regions and expands into the developing stalk. In the mid and late culminant it is expressed throughout the stalk.</text>
</comment>
<comment type="developmental stage">
    <text evidence="5 6 8 12">Expressed during development. First detected at 3 hours of development. Levels increase during aggregation and peak at 6 hours. Levels decrease after tight aggregate formation.</text>
</comment>
<comment type="disruption phenotype">
    <text evidence="7 8 10 13 15">No cAMP synthesis. Cells are unable to aggregate, stimulation with cAMP pulses restores aggregation but slug and fruiting body formation remains very inefficient. When placed in a cAMP gradient mutants lacking ACA acquire polarity and migrate along the gradient but fail to align in a head to tail fashion and form streams. They are also unable to suppress lateral pseudopod formation, resulting in abnormal turns and inefficient chemotaxis. Transfer of the temperature-sensitive mutant tsaca2 to a temperature of 28 degrees Celsius leads to developmental arrest that is reversible when the temperature is shifted down to 22 degrees Celsius. In mutants with a constitutively active ACA, localization to the uropodium in polarized cells is reduced and these mutants fail to stream in a cAMP gradient.</text>
</comment>
<comment type="similarity">
    <text evidence="2">Belongs to the adenylyl cyclase class-4/guanylyl cyclase family.</text>
</comment>
<sequence length="1407" mass="159702">MASSSPMFNDHAIARSKYALNSVLQQTNELHDGNGGGGYTPSSPHLGGVSLNKSQNQPYTQYNNGGGGGGGGGGHINPMHLNLNSITNNHNNHHNHHPNTLSTPHNNNHNNNNHSTSHHPHSNSVANGGHLSQSITQQRGGLADLANAVINRKNRSDSVQTKMKPTDSASNIESWAKVEKFSSSIFDSEKSKKSNIFQKYTLRLKNSYEKGYLHQHYNSQIMLLRITNLIGIVAVSYGFTKEAIFMLIAIRILCFNLFAFSIFLSFLRNRELYKKLFHPLFLFSFTTFFITILLEYKTTTTTLILFLYVVIFCCLYALGCLLFIWMVMCNLMNAICFIIFIFLESTLDRNNLISFVIYILTMFLVGASHLYVLEKFRKESFIAEKKLIKESNILKNEKEKSSKLLNNILPDFIIENIVYDFEKRDIVIPEPEEYKSCSILCFDIVQFTNMSAKLDSPSRLVDLLTQVFREFDTVVLRNGCQKIKTDGDAYICACGLKSKKKAKKQMPNSKSTPLLQSTSSTSVNNIDLDKDNKDNNNNNNNNKNSNNNFKNKNNIINNNNNSNSNNNNNNNSNNNNINNSGNDDDDEEIEDSELEHFEKLIDVAIEIMNLDVLKETGNTEGIQVQFRCGIAAGSVYGGVIGSQKYQFDIWGDTIARSHTLEQLGQPGKVHVGETIMTHKNWLKKWQYNYNIVSNSECKDQEHDYEFHKAHGECITSYFVDWKDDYREKKKKDLSCDFSINKVLNAETIESKSNNNNYNNNNYNNNNYNNNYNNNNLNNNSNNNNNEYGSSSSSSSVLGEAVTEQIDCNNTNPPLQHKKSQSILTNNENDIVSPSLTSNSPILDTTVNNNNNNNNTNNNNKNQNNIYGNNNNNEEDFKIKSKSNSSFEIEMSNIKKPKSRFIDRVMGILHHVKISNDKIDKEIIQIDEDFVKVTKLRKYFLFFENLTTEKFFHKYVIINNVVETKFFLVIGLILHLMFYLDDHIMDSAPYFNSNVIYLVMGIAFLVYIGLSFTRIFRTPLVYQIAFFILLCAFGVCTVLELIRFQNPLARSSLTRVCATLFYLNVFHSLNFLSVLFLNLFIFSFFIICSILISPTLTNHLYETDYIGFVIVLLIQICSSYGMKLAMRKAWVVNCKINFKTISVNKEKDKFNFLLKSIFPQSALTKLRDMIDTPNIETKGIVYVQPHQDVSIMFIQIAGFQEYDEPKDLIKKLNDIFSFFDGLLNQKYGGTVEKIKTIGNTYMAVSGLDGSPSFLEKMSDFALDVKAYTNSVAISRVVRIGISHGPLVAGCIGISRAKFDVWGDTANTASRMQSNAQDNEIMVTHSVYERLNKLFYFDDEKEILVKGKGKMVTHVLKGKKDLEQTNKWFTKPPEVWEVNATPAGIASPLSGTLLGEIGSFTTPRFHLSS</sequence>
<gene>
    <name type="primary">acaA</name>
    <name type="synonym">aca</name>
    <name type="ORF">DDB_G0281545</name>
</gene>
<name>CYAA_DICDI</name>